<gene>
    <name evidence="1" type="primary">TIC214</name>
    <name type="synonym">ycf1</name>
</gene>
<proteinExistence type="inferred from homology"/>
<geneLocation type="chloroplast"/>
<organism>
    <name type="scientific">Platanus occidentalis</name>
    <name type="common">Sycamore</name>
    <name type="synonym">American plane tree</name>
    <dbReference type="NCBI Taxonomy" id="4403"/>
    <lineage>
        <taxon>Eukaryota</taxon>
        <taxon>Viridiplantae</taxon>
        <taxon>Streptophyta</taxon>
        <taxon>Embryophyta</taxon>
        <taxon>Tracheophyta</taxon>
        <taxon>Spermatophyta</taxon>
        <taxon>Magnoliopsida</taxon>
        <taxon>Proteales</taxon>
        <taxon>Platanaceae</taxon>
        <taxon>Platanus</taxon>
    </lineage>
</organism>
<name>TI214_PLAOC</name>
<accession>Q09FY8</accession>
<feature type="chain" id="PRO_0000262625" description="Protein TIC 214">
    <location>
        <begin position="1"/>
        <end position="1915"/>
    </location>
</feature>
<feature type="transmembrane region" description="Helical" evidence="2">
    <location>
        <begin position="18"/>
        <end position="38"/>
    </location>
</feature>
<feature type="transmembrane region" description="Helical" evidence="2">
    <location>
        <begin position="64"/>
        <end position="84"/>
    </location>
</feature>
<feature type="transmembrane region" description="Helical" evidence="2">
    <location>
        <begin position="90"/>
        <end position="110"/>
    </location>
</feature>
<feature type="transmembrane region" description="Helical" evidence="2">
    <location>
        <begin position="126"/>
        <end position="146"/>
    </location>
</feature>
<feature type="transmembrane region" description="Helical" evidence="2">
    <location>
        <begin position="174"/>
        <end position="194"/>
    </location>
</feature>
<feature type="transmembrane region" description="Helical" evidence="2">
    <location>
        <begin position="230"/>
        <end position="250"/>
    </location>
</feature>
<feature type="region of interest" description="Disordered" evidence="3">
    <location>
        <begin position="260"/>
        <end position="319"/>
    </location>
</feature>
<feature type="region of interest" description="Disordered" evidence="3">
    <location>
        <begin position="1566"/>
        <end position="1631"/>
    </location>
</feature>
<feature type="compositionally biased region" description="Acidic residues" evidence="3">
    <location>
        <begin position="267"/>
        <end position="277"/>
    </location>
</feature>
<feature type="compositionally biased region" description="Basic and acidic residues" evidence="3">
    <location>
        <begin position="279"/>
        <end position="288"/>
    </location>
</feature>
<feature type="compositionally biased region" description="Acidic residues" evidence="3">
    <location>
        <begin position="304"/>
        <end position="315"/>
    </location>
</feature>
<feature type="compositionally biased region" description="Basic and acidic residues" evidence="3">
    <location>
        <begin position="1587"/>
        <end position="1601"/>
    </location>
</feature>
<feature type="compositionally biased region" description="Polar residues" evidence="3">
    <location>
        <begin position="1602"/>
        <end position="1631"/>
    </location>
</feature>
<dbReference type="EMBL" id="DQ923116">
    <property type="protein sequence ID" value="ABI49837.1"/>
    <property type="molecule type" value="Genomic_DNA"/>
</dbReference>
<dbReference type="RefSeq" id="YP_740623.1">
    <property type="nucleotide sequence ID" value="NC_008335.1"/>
</dbReference>
<dbReference type="GeneID" id="4271362"/>
<dbReference type="GO" id="GO:0009706">
    <property type="term" value="C:chloroplast inner membrane"/>
    <property type="evidence" value="ECO:0007669"/>
    <property type="project" value="UniProtKB-SubCell"/>
</dbReference>
<dbReference type="GO" id="GO:0015031">
    <property type="term" value="P:protein transport"/>
    <property type="evidence" value="ECO:0007669"/>
    <property type="project" value="UniProtKB-KW"/>
</dbReference>
<dbReference type="InterPro" id="IPR008896">
    <property type="entry name" value="TIC214"/>
</dbReference>
<dbReference type="PANTHER" id="PTHR33163:SF40">
    <property type="entry name" value="PROTEIN TIC 214"/>
    <property type="match status" value="1"/>
</dbReference>
<dbReference type="PANTHER" id="PTHR33163">
    <property type="entry name" value="PROTEIN TIC 214-RELATED"/>
    <property type="match status" value="1"/>
</dbReference>
<dbReference type="Pfam" id="PF05758">
    <property type="entry name" value="Ycf1"/>
    <property type="match status" value="1"/>
</dbReference>
<keyword id="KW-0150">Chloroplast</keyword>
<keyword id="KW-0472">Membrane</keyword>
<keyword id="KW-0934">Plastid</keyword>
<keyword id="KW-1001">Plastid inner membrane</keyword>
<keyword id="KW-0653">Protein transport</keyword>
<keyword id="KW-0812">Transmembrane</keyword>
<keyword id="KW-1133">Transmembrane helix</keyword>
<keyword id="KW-0813">Transport</keyword>
<reference key="1">
    <citation type="journal article" date="2006" name="BMC Plant Biol.">
        <title>Rapid and accurate pyrosequencing of angiosperm plastid genomes.</title>
        <authorList>
            <person name="Moore M.J."/>
            <person name="Dhingra A."/>
            <person name="Soltis P.S."/>
            <person name="Shaw R."/>
            <person name="Farmerie W.G."/>
            <person name="Folta K.M."/>
            <person name="Soltis D.E."/>
        </authorList>
    </citation>
    <scope>NUCLEOTIDE SEQUENCE [LARGE SCALE GENOMIC DNA]</scope>
</reference>
<sequence length="1915" mass="227739">MILKSFLLGNLLSLCMKIINSVVVVGLYYGFLTTFSIGPSYLFLLRARVMEEGTEKEVSATTGFITGQLMMFISIYYAPLHLALGRPHTITVLVLPYLLFHFFWHNHKYFLNINYGSTIRNSIRNLNIQCVFLNNLIFPLFNHFILPSSTLARLINIYMFQCNNKMLFVTSSFVGWLIGHILFMKWVELVLIWIRQNHFFRSNALFIRSNVLIVPKKNLVPELRNSMARIFSILLFITCIYYLGRMPSTLVTKKMKETSKMKQMGQSEEETDVEIETTSETKETKEEQEGSTEEDPSPSLYSEEKEDPDKIDETEEIRVNGNEKSKDEFHFRFKKTCYKYKNSPVFQNFYLDGNQENSKLEILKYEKKNLFWFQKPLVTLLFDYKRWNRPLRYIKNNQLENAVRNEMSQYFFYTCQSDGKQRISFTYPPSLSTFWEMIQRKMSLYTTEKLSPEELYNHWVYTNEQKRNNVSKEFINRIEALDKGSLTLDVLEKRTRLCNDKTEQQCLPKVYDPFLNGPYRGTIKKVSSSSIMNDYLITSIENSIEKLWINKIHGILPTDYREFEQKEKIDTFDGKSLSTDIFHFLTPISKFAGESTTSLNWKGLPLLAEQERNYSKDQAKYLKFLFAAVTTDPNNQIIRNKSIVINEICKKVPRWSYKLIDDLEQQEGEYEEESAEDHQIRSRKAKRVVIFTDNEPDTNTHTNTNNTSDRDEVEEVALIRYSQQPDFRRDIIKGSMRAQRRKIVIWELFQANVHSPLFLDKIDKTFFFSFDISEMTKFIFRNCMGKNTKLKTSDPEEKEKKEKKEENERIAVAETWDSILFAQPIRGSMLVTQSILRKYIVLPLLIIAKNTARILLFQFPEWFEDWEEWNREIHVKCTYNGVPLSETEFPRNWLKDGIQIKILFPLCLKPWHRFKLRSHHRGPMKKKGKKYNFCFLTVWGMETELPFGSPRNQPSFFEPILKELEKKIRKVKNQFFRILRVVKERTKWFLTVLKEKKRWVIEIILFIKRIMKELAKINPILLFGLKEVYESSENKNRKNSQNSITIISNQIIHESPIRIRSTDWTNYYYSLTEKKMKNLADRTSTIRNQIERITKDKKKIFLTPEINISPKKMSCGDKRSESLKSFWEIVKKRSIRLIRKWHFFLKFVIEKIYLLCIINIPRINAQLFLESTKKILDKYIYNYNDETNQEEIDEINQKKIHFISTIKKSLFHISNNNSQIFCDLSSLSQAYVFYKLSQTKVINKYHLRSVLEYHERSLFLKDRIKDYFRTQGIFHFESRHKKLRNSGMNDWKNWLKGHYQYQYDLSQTRWARLVPQKWQNRVNQRRTTQNKDSKKLGSYEKDQLIHYQKQNDYAVELLSNKKEKLKKHYGYDLLSHKYINYENKKDLYIYRSPLQVNEGREITYNYTTHKLESFCVLGGIPIRDYLGEDYIIETDKNPDRKYFDWGILHFCLRKEVDIDTWTNMDTEASINKKTKTGTNYSQIVEKINKKDLFMIHEEINPSNQKKKPFDWMGMNEEILNRTISNLELWFVPEFLLLYDTYKMKPWGIPIKLLLVNLNGNENVSENKNINRKQKKNLPLSSNKNKKKSLELENRNQEEKESSSQGDLGSNAQNQGNLGPNAQNQGNLGSVLPNQQKNLEEDYAGSDIKKVRKKKQFKSKAEVELDLLLKKYLLFQLRWNGSLNQRILNNIKIYCFLLRLINPKEITISSIQKGEMSLGIMLIKRDLTFTELIKRGIFIIEPVRLSIKWDGQFIMYQTIGISLVHKSKHQTNQRYREKRCIDKNHFEGFIARHENMLGNGDENHYDLLVPENISSPRRRRELRILTCFHFLNGNVLDRNPVFCNGNNVKNCGQFLNEDKHLDRDTNKLINMKLKFFLWPNYRLEDLACMNRYWFDTNNGSRFSMSRIHMYPRLKIS</sequence>
<protein>
    <recommendedName>
        <fullName evidence="1">Protein TIC 214</fullName>
    </recommendedName>
    <alternativeName>
        <fullName evidence="1">Translocon at the inner envelope membrane of chloroplasts 214</fullName>
        <shortName evidence="1">AtTIC214</shortName>
    </alternativeName>
</protein>
<comment type="function">
    <text evidence="1">Involved in protein precursor import into chloroplasts. May be part of an intermediate translocation complex acting as a protein-conducting channel at the inner envelope.</text>
</comment>
<comment type="subunit">
    <text evidence="1">Part of the Tic complex.</text>
</comment>
<comment type="subcellular location">
    <subcellularLocation>
        <location evidence="1">Plastid</location>
        <location evidence="1">Chloroplast inner membrane</location>
        <topology evidence="2">Multi-pass membrane protein</topology>
    </subcellularLocation>
</comment>
<comment type="similarity">
    <text evidence="4">Belongs to the TIC214 family.</text>
</comment>
<evidence type="ECO:0000250" key="1">
    <source>
        <dbReference type="UniProtKB" id="P56785"/>
    </source>
</evidence>
<evidence type="ECO:0000255" key="2"/>
<evidence type="ECO:0000256" key="3">
    <source>
        <dbReference type="SAM" id="MobiDB-lite"/>
    </source>
</evidence>
<evidence type="ECO:0000305" key="4"/>